<keyword id="KW-1003">Cell membrane</keyword>
<keyword id="KW-0378">Hydrolase</keyword>
<keyword id="KW-0472">Membrane</keyword>
<keyword id="KW-0479">Metal-binding</keyword>
<keyword id="KW-0482">Metalloprotease</keyword>
<keyword id="KW-0645">Protease</keyword>
<keyword id="KW-1185">Reference proteome</keyword>
<keyword id="KW-0812">Transmembrane</keyword>
<keyword id="KW-1133">Transmembrane helix</keyword>
<keyword id="KW-0862">Zinc</keyword>
<feature type="chain" id="PRO_1000020958" description="Protease HtpX homolog">
    <location>
        <begin position="1"/>
        <end position="299"/>
    </location>
</feature>
<feature type="transmembrane region" description="Helical" evidence="1">
    <location>
        <begin position="14"/>
        <end position="34"/>
    </location>
</feature>
<feature type="transmembrane region" description="Helical" evidence="1">
    <location>
        <begin position="39"/>
        <end position="59"/>
    </location>
</feature>
<feature type="transmembrane region" description="Helical" evidence="1">
    <location>
        <begin position="153"/>
        <end position="173"/>
    </location>
</feature>
<feature type="transmembrane region" description="Helical" evidence="1">
    <location>
        <begin position="198"/>
        <end position="218"/>
    </location>
</feature>
<feature type="active site" evidence="1">
    <location>
        <position position="144"/>
    </location>
</feature>
<feature type="binding site" evidence="1">
    <location>
        <position position="143"/>
    </location>
    <ligand>
        <name>Zn(2+)</name>
        <dbReference type="ChEBI" id="CHEBI:29105"/>
        <note>catalytic</note>
    </ligand>
</feature>
<feature type="binding site" evidence="1">
    <location>
        <position position="147"/>
    </location>
    <ligand>
        <name>Zn(2+)</name>
        <dbReference type="ChEBI" id="CHEBI:29105"/>
        <note>catalytic</note>
    </ligand>
</feature>
<feature type="binding site" evidence="1">
    <location>
        <position position="227"/>
    </location>
    <ligand>
        <name>Zn(2+)</name>
        <dbReference type="ChEBI" id="CHEBI:29105"/>
        <note>catalytic</note>
    </ligand>
</feature>
<comment type="cofactor">
    <cofactor evidence="1">
        <name>Zn(2+)</name>
        <dbReference type="ChEBI" id="CHEBI:29105"/>
    </cofactor>
    <text evidence="1">Binds 1 zinc ion per subunit.</text>
</comment>
<comment type="subcellular location">
    <subcellularLocation>
        <location evidence="1">Cell membrane</location>
        <topology evidence="1">Multi-pass membrane protein</topology>
    </subcellularLocation>
</comment>
<comment type="similarity">
    <text evidence="1">Belongs to the peptidase M48B family.</text>
</comment>
<name>HTPX_STRT2</name>
<gene>
    <name evidence="1" type="primary">htpX</name>
    <name type="ordered locus">stu0715</name>
</gene>
<reference key="1">
    <citation type="journal article" date="2004" name="Nat. Biotechnol.">
        <title>Complete sequence and comparative genome analysis of the dairy bacterium Streptococcus thermophilus.</title>
        <authorList>
            <person name="Bolotin A."/>
            <person name="Quinquis B."/>
            <person name="Renault P."/>
            <person name="Sorokin A."/>
            <person name="Ehrlich S.D."/>
            <person name="Kulakauskas S."/>
            <person name="Lapidus A."/>
            <person name="Goltsman E."/>
            <person name="Mazur M."/>
            <person name="Pusch G.D."/>
            <person name="Fonstein M."/>
            <person name="Overbeek R."/>
            <person name="Kyprides N."/>
            <person name="Purnelle B."/>
            <person name="Prozzi D."/>
            <person name="Ngui K."/>
            <person name="Masuy D."/>
            <person name="Hancy F."/>
            <person name="Burteau S."/>
            <person name="Boutry M."/>
            <person name="Delcour J."/>
            <person name="Goffeau A."/>
            <person name="Hols P."/>
        </authorList>
    </citation>
    <scope>NUCLEOTIDE SEQUENCE [LARGE SCALE GENOMIC DNA]</scope>
    <source>
        <strain>ATCC BAA-250 / LMG 18311</strain>
    </source>
</reference>
<proteinExistence type="inferred from homology"/>
<sequence length="299" mass="32706">MLFDQIARNKRKTWLLLLVFFLLLGLVGYGVGNLWLGSGFGGLILALVIGFIYVVTMIFQSTNVVMAMNGAREVDEQTAPNLYHVVEDMAMVAQIPMPRVFIVDDPSMNAFATGSSPKNAAVAATTGLLAVMNREELEGVIGHEVSHIRNYDIRISTIAVALASAITMLAGMARNMMLWGGGRRRNDDDRDGSSGLEIVFLILSLIAIILAPLAATLVQLAISRQREFLADASSVELTRNPQGMINALLKLDNSAPMQHHVDDASAALFINDPKKESGLQKLFYTHPPISERVERLKQM</sequence>
<organism>
    <name type="scientific">Streptococcus thermophilus (strain ATCC BAA-250 / LMG 18311)</name>
    <dbReference type="NCBI Taxonomy" id="264199"/>
    <lineage>
        <taxon>Bacteria</taxon>
        <taxon>Bacillati</taxon>
        <taxon>Bacillota</taxon>
        <taxon>Bacilli</taxon>
        <taxon>Lactobacillales</taxon>
        <taxon>Streptococcaceae</taxon>
        <taxon>Streptococcus</taxon>
    </lineage>
</organism>
<dbReference type="EC" id="3.4.24.-" evidence="1"/>
<dbReference type="EMBL" id="CP000023">
    <property type="protein sequence ID" value="AAV60408.1"/>
    <property type="molecule type" value="Genomic_DNA"/>
</dbReference>
<dbReference type="RefSeq" id="WP_011225763.1">
    <property type="nucleotide sequence ID" value="NC_006448.1"/>
</dbReference>
<dbReference type="SMR" id="Q5M4Z6"/>
<dbReference type="STRING" id="264199.stu0715"/>
<dbReference type="DNASU" id="3163962"/>
<dbReference type="KEGG" id="stl:stu0715"/>
<dbReference type="PATRIC" id="fig|264199.4.peg.723"/>
<dbReference type="eggNOG" id="COG0501">
    <property type="taxonomic scope" value="Bacteria"/>
</dbReference>
<dbReference type="HOGENOM" id="CLU_042266_2_1_9"/>
<dbReference type="Proteomes" id="UP000001170">
    <property type="component" value="Chromosome"/>
</dbReference>
<dbReference type="GO" id="GO:0005886">
    <property type="term" value="C:plasma membrane"/>
    <property type="evidence" value="ECO:0007669"/>
    <property type="project" value="UniProtKB-SubCell"/>
</dbReference>
<dbReference type="GO" id="GO:0004222">
    <property type="term" value="F:metalloendopeptidase activity"/>
    <property type="evidence" value="ECO:0007669"/>
    <property type="project" value="UniProtKB-UniRule"/>
</dbReference>
<dbReference type="GO" id="GO:0008270">
    <property type="term" value="F:zinc ion binding"/>
    <property type="evidence" value="ECO:0007669"/>
    <property type="project" value="UniProtKB-UniRule"/>
</dbReference>
<dbReference type="GO" id="GO:0006508">
    <property type="term" value="P:proteolysis"/>
    <property type="evidence" value="ECO:0007669"/>
    <property type="project" value="UniProtKB-KW"/>
</dbReference>
<dbReference type="CDD" id="cd07340">
    <property type="entry name" value="M48B_Htpx_like"/>
    <property type="match status" value="1"/>
</dbReference>
<dbReference type="Gene3D" id="3.30.2010.10">
    <property type="entry name" value="Metalloproteases ('zincins'), catalytic domain"/>
    <property type="match status" value="1"/>
</dbReference>
<dbReference type="HAMAP" id="MF_00188">
    <property type="entry name" value="Pept_M48_protease_HtpX"/>
    <property type="match status" value="1"/>
</dbReference>
<dbReference type="InterPro" id="IPR050083">
    <property type="entry name" value="HtpX_protease"/>
</dbReference>
<dbReference type="InterPro" id="IPR022919">
    <property type="entry name" value="Pept_M48_protease_HtpX"/>
</dbReference>
<dbReference type="InterPro" id="IPR001915">
    <property type="entry name" value="Peptidase_M48"/>
</dbReference>
<dbReference type="NCBIfam" id="NF003425">
    <property type="entry name" value="PRK04897.1"/>
    <property type="match status" value="1"/>
</dbReference>
<dbReference type="PANTHER" id="PTHR43221">
    <property type="entry name" value="PROTEASE HTPX"/>
    <property type="match status" value="1"/>
</dbReference>
<dbReference type="PANTHER" id="PTHR43221:SF1">
    <property type="entry name" value="PROTEASE HTPX"/>
    <property type="match status" value="1"/>
</dbReference>
<dbReference type="Pfam" id="PF01435">
    <property type="entry name" value="Peptidase_M48"/>
    <property type="match status" value="1"/>
</dbReference>
<protein>
    <recommendedName>
        <fullName evidence="1">Protease HtpX homolog</fullName>
        <ecNumber evidence="1">3.4.24.-</ecNumber>
    </recommendedName>
</protein>
<evidence type="ECO:0000255" key="1">
    <source>
        <dbReference type="HAMAP-Rule" id="MF_00188"/>
    </source>
</evidence>
<accession>Q5M4Z6</accession>